<protein>
    <recommendedName>
        <fullName evidence="2">Large ribosomal subunit protein uL6</fullName>
    </recommendedName>
    <alternativeName>
        <fullName>50S ribosomal protein L6</fullName>
    </alternativeName>
</protein>
<reference key="1">
    <citation type="journal article" date="1996" name="Gene">
        <title>Sequence, overproduction and purification of Vibrio proteolyticus ribosomal protein L18 for in vitro and in vivo studies.</title>
        <authorList>
            <person name="Setterquist R.A."/>
            <person name="Smith G.K."/>
            <person name="Oakley T.H."/>
            <person name="Lee Y.H."/>
            <person name="Fox G.E."/>
        </authorList>
    </citation>
    <scope>NUCLEOTIDE SEQUENCE [GENOMIC DNA]</scope>
    <source>
        <strain>ATCC 15338 / DSM 30189 / CCUG 20302 / JCM 21193 / LMG 3772 / NBRC 13287 / NCIMB 1326</strain>
    </source>
</reference>
<comment type="function">
    <text evidence="1">This protein binds to the 23S rRNA, and is important in its secondary structure. It is located near the subunit interface in the base of the L7/L12 stalk, and near the tRNA binding site of the peptidyltransferase center (By similarity).</text>
</comment>
<comment type="subunit">
    <text evidence="1">Part of the 50S ribosomal subunit.</text>
</comment>
<comment type="similarity">
    <text evidence="2">Belongs to the universal ribosomal protein uL6 family.</text>
</comment>
<gene>
    <name type="primary">rplF</name>
</gene>
<dbReference type="EMBL" id="U38943">
    <property type="protein sequence ID" value="AAB41328.1"/>
    <property type="molecule type" value="Genomic_DNA"/>
</dbReference>
<dbReference type="GO" id="GO:1990904">
    <property type="term" value="C:ribonucleoprotein complex"/>
    <property type="evidence" value="ECO:0007669"/>
    <property type="project" value="UniProtKB-KW"/>
</dbReference>
<dbReference type="GO" id="GO:0005840">
    <property type="term" value="C:ribosome"/>
    <property type="evidence" value="ECO:0007669"/>
    <property type="project" value="UniProtKB-KW"/>
</dbReference>
<dbReference type="GO" id="GO:0019843">
    <property type="term" value="F:rRNA binding"/>
    <property type="evidence" value="ECO:0007669"/>
    <property type="project" value="UniProtKB-KW"/>
</dbReference>
<feature type="chain" id="PRO_0000131076" description="Large ribosomal subunit protein uL6">
    <location>
        <begin position="1" status="less than"/>
        <end position="16"/>
    </location>
</feature>
<feature type="non-terminal residue">
    <location>
        <position position="1"/>
    </location>
</feature>
<evidence type="ECO:0000250" key="1"/>
<evidence type="ECO:0000305" key="2"/>
<proteinExistence type="inferred from homology"/>
<name>RL6_VIBPR</name>
<accession>Q56715</accession>
<sequence>VRYADENVRTKEAKKK</sequence>
<organism>
    <name type="scientific">Vibrio proteolyticus</name>
    <name type="common">Aeromonas proteolytica</name>
    <dbReference type="NCBI Taxonomy" id="671"/>
    <lineage>
        <taxon>Bacteria</taxon>
        <taxon>Pseudomonadati</taxon>
        <taxon>Pseudomonadota</taxon>
        <taxon>Gammaproteobacteria</taxon>
        <taxon>Vibrionales</taxon>
        <taxon>Vibrionaceae</taxon>
        <taxon>Vibrio</taxon>
    </lineage>
</organism>
<keyword id="KW-0687">Ribonucleoprotein</keyword>
<keyword id="KW-0689">Ribosomal protein</keyword>
<keyword id="KW-0694">RNA-binding</keyword>
<keyword id="KW-0699">rRNA-binding</keyword>